<proteinExistence type="inferred from homology"/>
<accession>Q9ZML7</accession>
<organism>
    <name type="scientific">Helicobacter pylori (strain J99 / ATCC 700824)</name>
    <name type="common">Campylobacter pylori J99</name>
    <dbReference type="NCBI Taxonomy" id="85963"/>
    <lineage>
        <taxon>Bacteria</taxon>
        <taxon>Pseudomonadati</taxon>
        <taxon>Campylobacterota</taxon>
        <taxon>Epsilonproteobacteria</taxon>
        <taxon>Campylobacterales</taxon>
        <taxon>Helicobacteraceae</taxon>
        <taxon>Helicobacter</taxon>
    </lineage>
</organism>
<reference key="1">
    <citation type="journal article" date="1999" name="Nature">
        <title>Genomic sequence comparison of two unrelated isolates of the human gastric pathogen Helicobacter pylori.</title>
        <authorList>
            <person name="Alm R.A."/>
            <person name="Ling L.-S.L."/>
            <person name="Moir D.T."/>
            <person name="King B.L."/>
            <person name="Brown E.D."/>
            <person name="Doig P.C."/>
            <person name="Smith D.R."/>
            <person name="Noonan B."/>
            <person name="Guild B.C."/>
            <person name="deJonge B.L."/>
            <person name="Carmel G."/>
            <person name="Tummino P.J."/>
            <person name="Caruso A."/>
            <person name="Uria-Nickelsen M."/>
            <person name="Mills D.M."/>
            <person name="Ives C."/>
            <person name="Gibson R."/>
            <person name="Merberg D."/>
            <person name="Mills S.D."/>
            <person name="Jiang Q."/>
            <person name="Taylor D.E."/>
            <person name="Vovis G.F."/>
            <person name="Trust T.J."/>
        </authorList>
    </citation>
    <scope>NUCLEOTIDE SEQUENCE [LARGE SCALE GENOMIC DNA]</scope>
    <source>
        <strain>J99 / ATCC 700824</strain>
    </source>
</reference>
<name>CDSA_HELPJ</name>
<evidence type="ECO:0000250" key="1"/>
<evidence type="ECO:0000255" key="2"/>
<evidence type="ECO:0000305" key="3"/>
<feature type="chain" id="PRO_0000090738" description="Phosphatidate cytidylyltransferase">
    <location>
        <begin position="1"/>
        <end position="266"/>
    </location>
</feature>
<feature type="transmembrane region" description="Helical" evidence="2">
    <location>
        <begin position="16"/>
        <end position="36"/>
    </location>
</feature>
<feature type="transmembrane region" description="Helical" evidence="2">
    <location>
        <begin position="52"/>
        <end position="72"/>
    </location>
</feature>
<feature type="transmembrane region" description="Helical" evidence="2">
    <location>
        <begin position="78"/>
        <end position="98"/>
    </location>
</feature>
<feature type="transmembrane region" description="Helical" evidence="2">
    <location>
        <begin position="101"/>
        <end position="121"/>
    </location>
</feature>
<feature type="transmembrane region" description="Helical" evidence="2">
    <location>
        <begin position="125"/>
        <end position="145"/>
    </location>
</feature>
<feature type="transmembrane region" description="Helical" evidence="2">
    <location>
        <begin position="164"/>
        <end position="184"/>
    </location>
</feature>
<feature type="transmembrane region" description="Helical" evidence="2">
    <location>
        <begin position="186"/>
        <end position="206"/>
    </location>
</feature>
<feature type="transmembrane region" description="Helical" evidence="2">
    <location>
        <begin position="237"/>
        <end position="257"/>
    </location>
</feature>
<gene>
    <name type="primary">cdsA</name>
    <name type="ordered locus">jhp_0201</name>
</gene>
<protein>
    <recommendedName>
        <fullName>Phosphatidate cytidylyltransferase</fullName>
        <ecNumber>2.7.7.41</ecNumber>
    </recommendedName>
    <alternativeName>
        <fullName>CDP-DAG synthase</fullName>
    </alternativeName>
    <alternativeName>
        <fullName>CDP-DG synthase</fullName>
    </alternativeName>
    <alternativeName>
        <fullName>CDP-diacylglycerol synthase</fullName>
        <shortName>CDS</shortName>
    </alternativeName>
    <alternativeName>
        <fullName>CDP-diglyceride pyrophosphorylase</fullName>
    </alternativeName>
    <alternativeName>
        <fullName>CDP-diglyceride synthase</fullName>
    </alternativeName>
    <alternativeName>
        <fullName>CTP:phosphatidate cytidylyltransferase</fullName>
    </alternativeName>
</protein>
<sequence length="266" mass="28788">MKEELFKEKSRYITGVVLIVVAGLILYADNLLLFWAVLGGIYAVGFFEALRLFQVKASFSLYLILVLSWVAAYFNGHPVECALISAMVMASVIAYQKAHHSEAILPFLYPGVGFFALFGVYKDFGAVAIIWLLVVVVASDVGAFFGGKLLGKTPFTATSPNKTLEGALIGVVLASVLGSFVGMGKLSGGFLMALLFSFLIALMAVFGDLYESYLKRKVGVKDSGKILPGHGGVLDRLDSMLFGALSLHVLLYFLEIWKETAVFLGD</sequence>
<keyword id="KW-0997">Cell inner membrane</keyword>
<keyword id="KW-1003">Cell membrane</keyword>
<keyword id="KW-0444">Lipid biosynthesis</keyword>
<keyword id="KW-0443">Lipid metabolism</keyword>
<keyword id="KW-0472">Membrane</keyword>
<keyword id="KW-0548">Nucleotidyltransferase</keyword>
<keyword id="KW-0594">Phospholipid biosynthesis</keyword>
<keyword id="KW-1208">Phospholipid metabolism</keyword>
<keyword id="KW-0808">Transferase</keyword>
<keyword id="KW-0812">Transmembrane</keyword>
<keyword id="KW-1133">Transmembrane helix</keyword>
<dbReference type="EC" id="2.7.7.41"/>
<dbReference type="EMBL" id="AE001439">
    <property type="protein sequence ID" value="AAD05785.1"/>
    <property type="molecule type" value="Genomic_DNA"/>
</dbReference>
<dbReference type="PIR" id="F71961">
    <property type="entry name" value="F71961"/>
</dbReference>
<dbReference type="RefSeq" id="WP_000656959.1">
    <property type="nucleotide sequence ID" value="NC_000921.1"/>
</dbReference>
<dbReference type="SMR" id="Q9ZML7"/>
<dbReference type="KEGG" id="hpj:jhp_0201"/>
<dbReference type="PATRIC" id="fig|85963.30.peg.817"/>
<dbReference type="eggNOG" id="COG0575">
    <property type="taxonomic scope" value="Bacteria"/>
</dbReference>
<dbReference type="UniPathway" id="UPA00557">
    <property type="reaction ID" value="UER00614"/>
</dbReference>
<dbReference type="Proteomes" id="UP000000804">
    <property type="component" value="Chromosome"/>
</dbReference>
<dbReference type="GO" id="GO:0005886">
    <property type="term" value="C:plasma membrane"/>
    <property type="evidence" value="ECO:0007669"/>
    <property type="project" value="UniProtKB-SubCell"/>
</dbReference>
<dbReference type="GO" id="GO:0004605">
    <property type="term" value="F:phosphatidate cytidylyltransferase activity"/>
    <property type="evidence" value="ECO:0007669"/>
    <property type="project" value="UniProtKB-EC"/>
</dbReference>
<dbReference type="GO" id="GO:0016024">
    <property type="term" value="P:CDP-diacylglycerol biosynthetic process"/>
    <property type="evidence" value="ECO:0007669"/>
    <property type="project" value="UniProtKB-UniPathway"/>
</dbReference>
<dbReference type="InterPro" id="IPR000374">
    <property type="entry name" value="PC_trans"/>
</dbReference>
<dbReference type="PANTHER" id="PTHR47101:SF1">
    <property type="entry name" value="PHOSPHATIDATE CYTIDYLYLTRANSFERASE 4, CHLOROPLASTIC"/>
    <property type="match status" value="1"/>
</dbReference>
<dbReference type="PANTHER" id="PTHR47101">
    <property type="entry name" value="PHOSPHATIDATE CYTIDYLYLTRANSFERASE 5, CHLOROPLASTIC"/>
    <property type="match status" value="1"/>
</dbReference>
<dbReference type="Pfam" id="PF01148">
    <property type="entry name" value="CTP_transf_1"/>
    <property type="match status" value="1"/>
</dbReference>
<dbReference type="PROSITE" id="PS01315">
    <property type="entry name" value="CDS"/>
    <property type="match status" value="1"/>
</dbReference>
<comment type="catalytic activity">
    <reaction>
        <text>a 1,2-diacyl-sn-glycero-3-phosphate + CTP + H(+) = a CDP-1,2-diacyl-sn-glycerol + diphosphate</text>
        <dbReference type="Rhea" id="RHEA:16229"/>
        <dbReference type="ChEBI" id="CHEBI:15378"/>
        <dbReference type="ChEBI" id="CHEBI:33019"/>
        <dbReference type="ChEBI" id="CHEBI:37563"/>
        <dbReference type="ChEBI" id="CHEBI:58332"/>
        <dbReference type="ChEBI" id="CHEBI:58608"/>
        <dbReference type="EC" id="2.7.7.41"/>
    </reaction>
</comment>
<comment type="pathway">
    <text>Phospholipid metabolism; CDP-diacylglycerol biosynthesis; CDP-diacylglycerol from sn-glycerol 3-phosphate: step 3/3.</text>
</comment>
<comment type="subcellular location">
    <subcellularLocation>
        <location evidence="1">Cell inner membrane</location>
        <topology evidence="1">Multi-pass membrane protein</topology>
    </subcellularLocation>
</comment>
<comment type="similarity">
    <text evidence="3">Belongs to the CDS family.</text>
</comment>